<keyword id="KW-1185">Reference proteome</keyword>
<reference key="1">
    <citation type="journal article" date="2005" name="J. Bacteriol.">
        <title>Structure and genome organization of AFV2, a novel archaeal lipothrixvirus with unusual terminal and core structures.</title>
        <authorList>
            <person name="Haring M."/>
            <person name="Vestergaard G."/>
            <person name="Brugger K."/>
            <person name="Rachel R."/>
            <person name="Garrett R.A."/>
            <person name="Prangishvili D."/>
        </authorList>
    </citation>
    <scope>NUCLEOTIDE SEQUENCE [GENOMIC DNA]</scope>
</reference>
<protein>
    <recommendedName>
        <fullName>Uncharacterized protein ORF162</fullName>
    </recommendedName>
</protein>
<accession>Q573C4</accession>
<organismHost>
    <name type="scientific">Acidianus sp. F28</name>
    <dbReference type="NCBI Taxonomy" id="315458"/>
</organismHost>
<dbReference type="EMBL" id="AJ854042">
    <property type="protein sequence ID" value="CAH69432.1"/>
    <property type="molecule type" value="Genomic_DNA"/>
</dbReference>
<dbReference type="RefSeq" id="YP_001496970.1">
    <property type="nucleotide sequence ID" value="NC_009884.1"/>
</dbReference>
<dbReference type="SMR" id="Q573C4"/>
<dbReference type="KEGG" id="vg:5656072"/>
<dbReference type="Proteomes" id="UP000006364">
    <property type="component" value="Genome"/>
</dbReference>
<gene>
    <name type="ORF">ORF162</name>
</gene>
<feature type="chain" id="PRO_0000384513" description="Uncharacterized protein ORF162">
    <location>
        <begin position="1"/>
        <end position="162"/>
    </location>
</feature>
<name>Y162_AFV2P</name>
<sequence>MTSMKSFSIVIANDKPHVDTNNTTSALLRKVDDETLNELLALVVIIVKKFYNPDYTIINFSFNADDNIKNHYNVYVTVYTDKSVLYHNHFIVTDVSLNDTPLFVKIVYDSFIFPHIIHTTISKSLSVSAMLMPWSLSGNNDAVLRFYKRLRRAISNSFSIEH</sequence>
<organism>
    <name type="scientific">Acidianus filamentous virus 2 (isolate Italy/Pozzuoli)</name>
    <name type="common">AFV-2</name>
    <dbReference type="NCBI Taxonomy" id="654910"/>
    <lineage>
        <taxon>Viruses</taxon>
        <taxon>Adnaviria</taxon>
        <taxon>Zilligvirae</taxon>
        <taxon>Taleaviricota</taxon>
        <taxon>Tokiviricetes</taxon>
        <taxon>Ligamenvirales</taxon>
        <taxon>Lipothrixviridae</taxon>
        <taxon>Deltalipothrixvirus</taxon>
        <taxon>Acidianus filamentous virus 2</taxon>
    </lineage>
</organism>
<proteinExistence type="predicted"/>